<proteinExistence type="evidence at protein level"/>
<name>YFIT_BACSU</name>
<sequence>MTSVNLSYPIGEYKPRESISKEQKDKWIQVLEEVPAKLKQAVEVMTDSQLDTPYRDGGWTVRQVVHHLADSHMNSYIRFKLSLTEETPAIRPYDEKAWSELKDSKTADPSGSLALLQELHGRWTALLRTLTDQQFKRGFYHPDTKEIITLENALGLYVWHSHHHIAHITELSRRMGWS</sequence>
<comment type="function">
    <text>Possible metal-dependent hydrolase.</text>
</comment>
<comment type="cofactor">
    <cofactor evidence="1">
        <name>Zn(2+)</name>
        <dbReference type="ChEBI" id="CHEBI:29105"/>
    </cofactor>
    <cofactor evidence="1">
        <name>Ni(2+)</name>
        <dbReference type="ChEBI" id="CHEBI:49786"/>
    </cofactor>
    <text evidence="1">Binds 1 zinc ion per subunit. Is able to bind nickel instead of zinc.</text>
</comment>
<comment type="subunit">
    <text evidence="1">Homodimer.</text>
</comment>
<comment type="subcellular location">
    <subcellularLocation>
        <location evidence="2">Cytoplasm</location>
    </subcellularLocation>
</comment>
<comment type="similarity">
    <text evidence="2">Belongs to the metal hydrolase YfiT family.</text>
</comment>
<keyword id="KW-0002">3D-structure</keyword>
<keyword id="KW-0963">Cytoplasm</keyword>
<keyword id="KW-0378">Hydrolase</keyword>
<keyword id="KW-0479">Metal-binding</keyword>
<keyword id="KW-0533">Nickel</keyword>
<keyword id="KW-1185">Reference proteome</keyword>
<keyword id="KW-0862">Zinc</keyword>
<evidence type="ECO:0000269" key="1">
    <source>
    </source>
</evidence>
<evidence type="ECO:0000305" key="2"/>
<evidence type="ECO:0007829" key="3">
    <source>
        <dbReference type="PDB" id="1RXQ"/>
    </source>
</evidence>
<dbReference type="EC" id="3.-.-.-"/>
<dbReference type="EMBL" id="D85082">
    <property type="protein sequence ID" value="BAA24460.1"/>
    <property type="molecule type" value="Genomic_DNA"/>
</dbReference>
<dbReference type="EMBL" id="AL009126">
    <property type="protein sequence ID" value="CAB12668.1"/>
    <property type="molecule type" value="Genomic_DNA"/>
</dbReference>
<dbReference type="PIR" id="F69804">
    <property type="entry name" value="F69804"/>
</dbReference>
<dbReference type="PDB" id="1RXQ">
    <property type="method" value="X-ray"/>
    <property type="resolution" value="1.70 A"/>
    <property type="chains" value="A/B/C/D=1-178"/>
</dbReference>
<dbReference type="PDBsum" id="1RXQ"/>
<dbReference type="SMR" id="O31562"/>
<dbReference type="FunCoup" id="O31562">
    <property type="interactions" value="1"/>
</dbReference>
<dbReference type="STRING" id="224308.BSU08390"/>
<dbReference type="PaxDb" id="224308-BSU08390"/>
<dbReference type="EnsemblBacteria" id="CAB12668">
    <property type="protein sequence ID" value="CAB12668"/>
    <property type="gene ID" value="BSU_08390"/>
</dbReference>
<dbReference type="GeneID" id="939711"/>
<dbReference type="KEGG" id="bsu:BSU08390"/>
<dbReference type="PATRIC" id="fig|224308.179.peg.907"/>
<dbReference type="eggNOG" id="COG2318">
    <property type="taxonomic scope" value="Bacteria"/>
</dbReference>
<dbReference type="InParanoid" id="O31562"/>
<dbReference type="OrthoDB" id="9796039at2"/>
<dbReference type="PhylomeDB" id="O31562"/>
<dbReference type="BioCyc" id="BSUB:BSU08390-MONOMER"/>
<dbReference type="EvolutionaryTrace" id="O31562"/>
<dbReference type="Proteomes" id="UP000001570">
    <property type="component" value="Chromosome"/>
</dbReference>
<dbReference type="GO" id="GO:0005737">
    <property type="term" value="C:cytoplasm"/>
    <property type="evidence" value="ECO:0007669"/>
    <property type="project" value="UniProtKB-SubCell"/>
</dbReference>
<dbReference type="GO" id="GO:0016787">
    <property type="term" value="F:hydrolase activity"/>
    <property type="evidence" value="ECO:0007669"/>
    <property type="project" value="UniProtKB-UniRule"/>
</dbReference>
<dbReference type="GO" id="GO:0008270">
    <property type="term" value="F:zinc ion binding"/>
    <property type="evidence" value="ECO:0007669"/>
    <property type="project" value="UniProtKB-UniRule"/>
</dbReference>
<dbReference type="Gene3D" id="1.20.120.450">
    <property type="entry name" value="dinb family like domain"/>
    <property type="match status" value="1"/>
</dbReference>
<dbReference type="HAMAP" id="MF_01256">
    <property type="entry name" value="YfiT_hydrol"/>
    <property type="match status" value="1"/>
</dbReference>
<dbReference type="InterPro" id="IPR024775">
    <property type="entry name" value="DinB-like"/>
</dbReference>
<dbReference type="InterPro" id="IPR034660">
    <property type="entry name" value="DinB/YfiT-like"/>
</dbReference>
<dbReference type="InterPro" id="IPR023774">
    <property type="entry name" value="Put_metal_dep_hydrolase_YfiT"/>
</dbReference>
<dbReference type="NCBIfam" id="NF009807">
    <property type="entry name" value="PRK13291.1"/>
    <property type="match status" value="1"/>
</dbReference>
<dbReference type="Pfam" id="PF12867">
    <property type="entry name" value="DinB_2"/>
    <property type="match status" value="1"/>
</dbReference>
<dbReference type="SUPFAM" id="SSF109854">
    <property type="entry name" value="DinB/YfiT-like putative metalloenzymes"/>
    <property type="match status" value="1"/>
</dbReference>
<accession>O31562</accession>
<accession>Q79EW7</accession>
<gene>
    <name type="primary">yfiT</name>
    <name type="ordered locus">BSU08390</name>
</gene>
<reference key="1">
    <citation type="journal article" date="1996" name="DNA Res.">
        <title>Cloning and sequencing of a 27.8-kb nucleotide sequence of the 79 degrees-81 degrees region of the Bacillus subtilis genome containing the sspE locus.</title>
        <authorList>
            <person name="Yamamoto H."/>
            <person name="Uchiyama S."/>
            <person name="Sekiguchi J."/>
        </authorList>
    </citation>
    <scope>NUCLEOTIDE SEQUENCE [GENOMIC DNA]</scope>
</reference>
<reference key="2">
    <citation type="journal article" date="1997" name="Nature">
        <title>The complete genome sequence of the Gram-positive bacterium Bacillus subtilis.</title>
        <authorList>
            <person name="Kunst F."/>
            <person name="Ogasawara N."/>
            <person name="Moszer I."/>
            <person name="Albertini A.M."/>
            <person name="Alloni G."/>
            <person name="Azevedo V."/>
            <person name="Bertero M.G."/>
            <person name="Bessieres P."/>
            <person name="Bolotin A."/>
            <person name="Borchert S."/>
            <person name="Borriss R."/>
            <person name="Boursier L."/>
            <person name="Brans A."/>
            <person name="Braun M."/>
            <person name="Brignell S.C."/>
            <person name="Bron S."/>
            <person name="Brouillet S."/>
            <person name="Bruschi C.V."/>
            <person name="Caldwell B."/>
            <person name="Capuano V."/>
            <person name="Carter N.M."/>
            <person name="Choi S.-K."/>
            <person name="Codani J.-J."/>
            <person name="Connerton I.F."/>
            <person name="Cummings N.J."/>
            <person name="Daniel R.A."/>
            <person name="Denizot F."/>
            <person name="Devine K.M."/>
            <person name="Duesterhoeft A."/>
            <person name="Ehrlich S.D."/>
            <person name="Emmerson P.T."/>
            <person name="Entian K.-D."/>
            <person name="Errington J."/>
            <person name="Fabret C."/>
            <person name="Ferrari E."/>
            <person name="Foulger D."/>
            <person name="Fritz C."/>
            <person name="Fujita M."/>
            <person name="Fujita Y."/>
            <person name="Fuma S."/>
            <person name="Galizzi A."/>
            <person name="Galleron N."/>
            <person name="Ghim S.-Y."/>
            <person name="Glaser P."/>
            <person name="Goffeau A."/>
            <person name="Golightly E.J."/>
            <person name="Grandi G."/>
            <person name="Guiseppi G."/>
            <person name="Guy B.J."/>
            <person name="Haga K."/>
            <person name="Haiech J."/>
            <person name="Harwood C.R."/>
            <person name="Henaut A."/>
            <person name="Hilbert H."/>
            <person name="Holsappel S."/>
            <person name="Hosono S."/>
            <person name="Hullo M.-F."/>
            <person name="Itaya M."/>
            <person name="Jones L.-M."/>
            <person name="Joris B."/>
            <person name="Karamata D."/>
            <person name="Kasahara Y."/>
            <person name="Klaerr-Blanchard M."/>
            <person name="Klein C."/>
            <person name="Kobayashi Y."/>
            <person name="Koetter P."/>
            <person name="Koningstein G."/>
            <person name="Krogh S."/>
            <person name="Kumano M."/>
            <person name="Kurita K."/>
            <person name="Lapidus A."/>
            <person name="Lardinois S."/>
            <person name="Lauber J."/>
            <person name="Lazarevic V."/>
            <person name="Lee S.-M."/>
            <person name="Levine A."/>
            <person name="Liu H."/>
            <person name="Masuda S."/>
            <person name="Mauel C."/>
            <person name="Medigue C."/>
            <person name="Medina N."/>
            <person name="Mellado R.P."/>
            <person name="Mizuno M."/>
            <person name="Moestl D."/>
            <person name="Nakai S."/>
            <person name="Noback M."/>
            <person name="Noone D."/>
            <person name="O'Reilly M."/>
            <person name="Ogawa K."/>
            <person name="Ogiwara A."/>
            <person name="Oudega B."/>
            <person name="Park S.-H."/>
            <person name="Parro V."/>
            <person name="Pohl T.M."/>
            <person name="Portetelle D."/>
            <person name="Porwollik S."/>
            <person name="Prescott A.M."/>
            <person name="Presecan E."/>
            <person name="Pujic P."/>
            <person name="Purnelle B."/>
            <person name="Rapoport G."/>
            <person name="Rey M."/>
            <person name="Reynolds S."/>
            <person name="Rieger M."/>
            <person name="Rivolta C."/>
            <person name="Rocha E."/>
            <person name="Roche B."/>
            <person name="Rose M."/>
            <person name="Sadaie Y."/>
            <person name="Sato T."/>
            <person name="Scanlan E."/>
            <person name="Schleich S."/>
            <person name="Schroeter R."/>
            <person name="Scoffone F."/>
            <person name="Sekiguchi J."/>
            <person name="Sekowska A."/>
            <person name="Seror S.J."/>
            <person name="Serror P."/>
            <person name="Shin B.-S."/>
            <person name="Soldo B."/>
            <person name="Sorokin A."/>
            <person name="Tacconi E."/>
            <person name="Takagi T."/>
            <person name="Takahashi H."/>
            <person name="Takemaru K."/>
            <person name="Takeuchi M."/>
            <person name="Tamakoshi A."/>
            <person name="Tanaka T."/>
            <person name="Terpstra P."/>
            <person name="Tognoni A."/>
            <person name="Tosato V."/>
            <person name="Uchiyama S."/>
            <person name="Vandenbol M."/>
            <person name="Vannier F."/>
            <person name="Vassarotti A."/>
            <person name="Viari A."/>
            <person name="Wambutt R."/>
            <person name="Wedler E."/>
            <person name="Wedler H."/>
            <person name="Weitzenegger T."/>
            <person name="Winters P."/>
            <person name="Wipat A."/>
            <person name="Yamamoto H."/>
            <person name="Yamane K."/>
            <person name="Yasumoto K."/>
            <person name="Yata K."/>
            <person name="Yoshida K."/>
            <person name="Yoshikawa H.-F."/>
            <person name="Zumstein E."/>
            <person name="Yoshikawa H."/>
            <person name="Danchin A."/>
        </authorList>
    </citation>
    <scope>NUCLEOTIDE SEQUENCE [LARGE SCALE GENOMIC DNA]</scope>
    <source>
        <strain>168</strain>
    </source>
</reference>
<reference key="3">
    <citation type="journal article" date="2004" name="Biochemistry">
        <title>YfiT from Bacillus subtilis is a probable metal-dependent hydrolase with an unusual four-helix bundle topology.</title>
        <authorList>
            <person name="Rajan S.S."/>
            <person name="Yang X."/>
            <person name="Shuvalova L."/>
            <person name="Collart F."/>
            <person name="Anderson W.F."/>
        </authorList>
    </citation>
    <scope>X-RAY CRYSTALLOGRAPHY (1.7 ANGSTROMS)</scope>
    <scope>SUBUNIT</scope>
    <scope>COFACTOR</scope>
</reference>
<feature type="chain" id="PRO_0000162373" description="Putative metal-dependent hydrolase YfiT">
    <location>
        <begin position="1"/>
        <end position="178"/>
    </location>
</feature>
<feature type="binding site">
    <location>
        <position position="67"/>
    </location>
    <ligand>
        <name>Zn(2+)</name>
        <dbReference type="ChEBI" id="CHEBI:29105"/>
    </ligand>
</feature>
<feature type="binding site">
    <location>
        <position position="160"/>
    </location>
    <ligand>
        <name>Zn(2+)</name>
        <dbReference type="ChEBI" id="CHEBI:29105"/>
    </ligand>
</feature>
<feature type="binding site">
    <location>
        <position position="164"/>
    </location>
    <ligand>
        <name>Zn(2+)</name>
        <dbReference type="ChEBI" id="CHEBI:29105"/>
    </ligand>
</feature>
<feature type="helix" evidence="3">
    <location>
        <begin position="21"/>
        <end position="42"/>
    </location>
</feature>
<feature type="helix" evidence="3">
    <location>
        <begin position="47"/>
        <end position="50"/>
    </location>
</feature>
<feature type="strand" evidence="3">
    <location>
        <begin position="52"/>
        <end position="55"/>
    </location>
</feature>
<feature type="helix" evidence="3">
    <location>
        <begin position="61"/>
        <end position="84"/>
    </location>
</feature>
<feature type="strand" evidence="3">
    <location>
        <begin position="85"/>
        <end position="87"/>
    </location>
</feature>
<feature type="helix" evidence="3">
    <location>
        <begin position="95"/>
        <end position="100"/>
    </location>
</feature>
<feature type="helix" evidence="3">
    <location>
        <begin position="102"/>
        <end position="106"/>
    </location>
</feature>
<feature type="helix" evidence="3">
    <location>
        <begin position="109"/>
        <end position="129"/>
    </location>
</feature>
<feature type="helix" evidence="3">
    <location>
        <begin position="132"/>
        <end position="135"/>
    </location>
</feature>
<feature type="strand" evidence="3">
    <location>
        <begin position="138"/>
        <end position="140"/>
    </location>
</feature>
<feature type="turn" evidence="3">
    <location>
        <begin position="142"/>
        <end position="144"/>
    </location>
</feature>
<feature type="strand" evidence="3">
    <location>
        <begin position="147"/>
        <end position="149"/>
    </location>
</feature>
<feature type="helix" evidence="3">
    <location>
        <begin position="150"/>
        <end position="175"/>
    </location>
</feature>
<protein>
    <recommendedName>
        <fullName>Putative metal-dependent hydrolase YfiT</fullName>
        <ecNumber>3.-.-.-</ecNumber>
    </recommendedName>
</protein>
<organism>
    <name type="scientific">Bacillus subtilis (strain 168)</name>
    <dbReference type="NCBI Taxonomy" id="224308"/>
    <lineage>
        <taxon>Bacteria</taxon>
        <taxon>Bacillati</taxon>
        <taxon>Bacillota</taxon>
        <taxon>Bacilli</taxon>
        <taxon>Bacillales</taxon>
        <taxon>Bacillaceae</taxon>
        <taxon>Bacillus</taxon>
    </lineage>
</organism>